<gene>
    <name evidence="1" type="primary">ilvD</name>
    <name type="ordered locus">VF_2559</name>
</gene>
<proteinExistence type="inferred from homology"/>
<feature type="chain" id="PRO_0000103526" description="Dihydroxy-acid dehydratase">
    <location>
        <begin position="1"/>
        <end position="613"/>
    </location>
</feature>
<feature type="active site" description="Proton acceptor" evidence="1">
    <location>
        <position position="517"/>
    </location>
</feature>
<feature type="binding site" evidence="1">
    <location>
        <position position="81"/>
    </location>
    <ligand>
        <name>Mg(2+)</name>
        <dbReference type="ChEBI" id="CHEBI:18420"/>
    </ligand>
</feature>
<feature type="binding site" evidence="1">
    <location>
        <position position="122"/>
    </location>
    <ligand>
        <name>[2Fe-2S] cluster</name>
        <dbReference type="ChEBI" id="CHEBI:190135"/>
    </ligand>
</feature>
<feature type="binding site" evidence="1">
    <location>
        <position position="123"/>
    </location>
    <ligand>
        <name>Mg(2+)</name>
        <dbReference type="ChEBI" id="CHEBI:18420"/>
    </ligand>
</feature>
<feature type="binding site" description="via carbamate group" evidence="1">
    <location>
        <position position="124"/>
    </location>
    <ligand>
        <name>Mg(2+)</name>
        <dbReference type="ChEBI" id="CHEBI:18420"/>
    </ligand>
</feature>
<feature type="binding site" evidence="1">
    <location>
        <position position="195"/>
    </location>
    <ligand>
        <name>[2Fe-2S] cluster</name>
        <dbReference type="ChEBI" id="CHEBI:190135"/>
    </ligand>
</feature>
<feature type="binding site" evidence="1">
    <location>
        <position position="491"/>
    </location>
    <ligand>
        <name>Mg(2+)</name>
        <dbReference type="ChEBI" id="CHEBI:18420"/>
    </ligand>
</feature>
<feature type="modified residue" description="N6-carboxylysine" evidence="1">
    <location>
        <position position="124"/>
    </location>
</feature>
<protein>
    <recommendedName>
        <fullName evidence="1">Dihydroxy-acid dehydratase</fullName>
        <shortName evidence="1">DAD</shortName>
        <ecNumber evidence="1">4.2.1.9</ecNumber>
    </recommendedName>
</protein>
<keyword id="KW-0001">2Fe-2S</keyword>
<keyword id="KW-0028">Amino-acid biosynthesis</keyword>
<keyword id="KW-0100">Branched-chain amino acid biosynthesis</keyword>
<keyword id="KW-0408">Iron</keyword>
<keyword id="KW-0411">Iron-sulfur</keyword>
<keyword id="KW-0456">Lyase</keyword>
<keyword id="KW-0460">Magnesium</keyword>
<keyword id="KW-0479">Metal-binding</keyword>
<keyword id="KW-1185">Reference proteome</keyword>
<dbReference type="EC" id="4.2.1.9" evidence="1"/>
<dbReference type="EMBL" id="CP000020">
    <property type="protein sequence ID" value="AAW87054.1"/>
    <property type="molecule type" value="Genomic_DNA"/>
</dbReference>
<dbReference type="RefSeq" id="WP_011262897.1">
    <property type="nucleotide sequence ID" value="NZ_CAWLES010000001.1"/>
</dbReference>
<dbReference type="RefSeq" id="YP_205942.1">
    <property type="nucleotide sequence ID" value="NC_006840.2"/>
</dbReference>
<dbReference type="SMR" id="Q5E1P2"/>
<dbReference type="STRING" id="312309.VF_2559"/>
<dbReference type="EnsemblBacteria" id="AAW87054">
    <property type="protein sequence ID" value="AAW87054"/>
    <property type="gene ID" value="VF_2559"/>
</dbReference>
<dbReference type="GeneID" id="54165309"/>
<dbReference type="KEGG" id="vfi:VF_2559"/>
<dbReference type="PATRIC" id="fig|312309.11.peg.2586"/>
<dbReference type="eggNOG" id="COG0129">
    <property type="taxonomic scope" value="Bacteria"/>
</dbReference>
<dbReference type="HOGENOM" id="CLU_014271_4_2_6"/>
<dbReference type="OrthoDB" id="9807077at2"/>
<dbReference type="UniPathway" id="UPA00047">
    <property type="reaction ID" value="UER00057"/>
</dbReference>
<dbReference type="UniPathway" id="UPA00049">
    <property type="reaction ID" value="UER00061"/>
</dbReference>
<dbReference type="Proteomes" id="UP000000537">
    <property type="component" value="Chromosome I"/>
</dbReference>
<dbReference type="GO" id="GO:0005829">
    <property type="term" value="C:cytosol"/>
    <property type="evidence" value="ECO:0007669"/>
    <property type="project" value="TreeGrafter"/>
</dbReference>
<dbReference type="GO" id="GO:0051537">
    <property type="term" value="F:2 iron, 2 sulfur cluster binding"/>
    <property type="evidence" value="ECO:0007669"/>
    <property type="project" value="UniProtKB-UniRule"/>
</dbReference>
<dbReference type="GO" id="GO:0004160">
    <property type="term" value="F:dihydroxy-acid dehydratase activity"/>
    <property type="evidence" value="ECO:0007669"/>
    <property type="project" value="UniProtKB-UniRule"/>
</dbReference>
<dbReference type="GO" id="GO:0000287">
    <property type="term" value="F:magnesium ion binding"/>
    <property type="evidence" value="ECO:0007669"/>
    <property type="project" value="UniProtKB-UniRule"/>
</dbReference>
<dbReference type="GO" id="GO:0009097">
    <property type="term" value="P:isoleucine biosynthetic process"/>
    <property type="evidence" value="ECO:0007669"/>
    <property type="project" value="UniProtKB-UniRule"/>
</dbReference>
<dbReference type="GO" id="GO:0009099">
    <property type="term" value="P:L-valine biosynthetic process"/>
    <property type="evidence" value="ECO:0007669"/>
    <property type="project" value="UniProtKB-UniRule"/>
</dbReference>
<dbReference type="FunFam" id="3.50.30.80:FF:000001">
    <property type="entry name" value="Dihydroxy-acid dehydratase"/>
    <property type="match status" value="1"/>
</dbReference>
<dbReference type="Gene3D" id="3.50.30.80">
    <property type="entry name" value="IlvD/EDD C-terminal domain-like"/>
    <property type="match status" value="1"/>
</dbReference>
<dbReference type="HAMAP" id="MF_00012">
    <property type="entry name" value="IlvD"/>
    <property type="match status" value="1"/>
</dbReference>
<dbReference type="InterPro" id="IPR042096">
    <property type="entry name" value="Dihydro-acid_dehy_C"/>
</dbReference>
<dbReference type="InterPro" id="IPR004404">
    <property type="entry name" value="DihydroxyA_deHydtase"/>
</dbReference>
<dbReference type="InterPro" id="IPR020558">
    <property type="entry name" value="DiOHA_6PGluconate_deHydtase_CS"/>
</dbReference>
<dbReference type="InterPro" id="IPR056740">
    <property type="entry name" value="ILV_EDD_C"/>
</dbReference>
<dbReference type="InterPro" id="IPR000581">
    <property type="entry name" value="ILV_EDD_N"/>
</dbReference>
<dbReference type="InterPro" id="IPR037237">
    <property type="entry name" value="IlvD/EDD_N"/>
</dbReference>
<dbReference type="NCBIfam" id="TIGR00110">
    <property type="entry name" value="ilvD"/>
    <property type="match status" value="1"/>
</dbReference>
<dbReference type="NCBIfam" id="NF009103">
    <property type="entry name" value="PRK12448.1"/>
    <property type="match status" value="1"/>
</dbReference>
<dbReference type="PANTHER" id="PTHR43661">
    <property type="entry name" value="D-XYLONATE DEHYDRATASE"/>
    <property type="match status" value="1"/>
</dbReference>
<dbReference type="PANTHER" id="PTHR43661:SF3">
    <property type="entry name" value="D-XYLONATE DEHYDRATASE YAGF-RELATED"/>
    <property type="match status" value="1"/>
</dbReference>
<dbReference type="Pfam" id="PF24877">
    <property type="entry name" value="ILV_EDD_C"/>
    <property type="match status" value="1"/>
</dbReference>
<dbReference type="Pfam" id="PF00920">
    <property type="entry name" value="ILVD_EDD_N"/>
    <property type="match status" value="1"/>
</dbReference>
<dbReference type="SUPFAM" id="SSF143975">
    <property type="entry name" value="IlvD/EDD N-terminal domain-like"/>
    <property type="match status" value="1"/>
</dbReference>
<dbReference type="SUPFAM" id="SSF52016">
    <property type="entry name" value="LeuD/IlvD-like"/>
    <property type="match status" value="1"/>
</dbReference>
<dbReference type="PROSITE" id="PS00886">
    <property type="entry name" value="ILVD_EDD_1"/>
    <property type="match status" value="1"/>
</dbReference>
<dbReference type="PROSITE" id="PS00887">
    <property type="entry name" value="ILVD_EDD_2"/>
    <property type="match status" value="1"/>
</dbReference>
<accession>Q5E1P2</accession>
<name>ILVD_ALIF1</name>
<organism>
    <name type="scientific">Aliivibrio fischeri (strain ATCC 700601 / ES114)</name>
    <name type="common">Vibrio fischeri</name>
    <dbReference type="NCBI Taxonomy" id="312309"/>
    <lineage>
        <taxon>Bacteria</taxon>
        <taxon>Pseudomonadati</taxon>
        <taxon>Pseudomonadota</taxon>
        <taxon>Gammaproteobacteria</taxon>
        <taxon>Vibrionales</taxon>
        <taxon>Vibrionaceae</taxon>
        <taxon>Aliivibrio</taxon>
    </lineage>
</organism>
<reference key="1">
    <citation type="journal article" date="2005" name="Proc. Natl. Acad. Sci. U.S.A.">
        <title>Complete genome sequence of Vibrio fischeri: a symbiotic bacterium with pathogenic congeners.</title>
        <authorList>
            <person name="Ruby E.G."/>
            <person name="Urbanowski M."/>
            <person name="Campbell J."/>
            <person name="Dunn A."/>
            <person name="Faini M."/>
            <person name="Gunsalus R."/>
            <person name="Lostroh P."/>
            <person name="Lupp C."/>
            <person name="McCann J."/>
            <person name="Millikan D."/>
            <person name="Schaefer A."/>
            <person name="Stabb E."/>
            <person name="Stevens A."/>
            <person name="Visick K."/>
            <person name="Whistler C."/>
            <person name="Greenberg E.P."/>
        </authorList>
    </citation>
    <scope>NUCLEOTIDE SEQUENCE [LARGE SCALE GENOMIC DNA]</scope>
    <source>
        <strain>ATCC 700601 / ES114</strain>
    </source>
</reference>
<evidence type="ECO:0000255" key="1">
    <source>
        <dbReference type="HAMAP-Rule" id="MF_00012"/>
    </source>
</evidence>
<sequence>MPTYRSATTTHGRNMAGARALWRATGVKEDDFGKPIIAVVNSFTQFVPGHVHLKDMGQLVAGEIEKAGGIAKEFNTIAVDDGIAMGHGGMLYSLPSRELIADSVEYMVNAHCADAMVCISNCDKITPGMMMAAMRLNIPVIFVSGGPMEAGKTKLSDQIIKLDLVDAMIQGADPTVSDAQSEQIERSACPTCGSCSGMFTANSMNCLTEALGLSQPGNGSMLATHADREQLFINAGKRIVELTKRYYEQDDESALPRNIADRAAFENAMALDIAMGGSSNTVLHLLASAQEGEIDFDMGDIDEMSRRVPHLCKVAPSTPKYHMEDVHRAGGVMAILGELDRAGLLNNQTKTVLGLTMQEQLAQYDIMQTEDEEILKFFRAGPAGIRTTKAFSQDCRWDRLDDDRKEGCIRTKENAFSQEGGLAVLSGNIAVDGCIVKTAGVDEENLKFQGPAIVFESQDSAVEGILGGKVKAGEVVVIRYEGPKGGPGMQEMLYPTTYLKSMGLGKACALLTDGRFSGGTSGLSIGHASPEAASGGTIGLVNDGDIITIDIPSRSITLDVPESELQARRAKQDELGWKPVNRQREVSFALKAYASMATSADKGAVRDKSKLEG</sequence>
<comment type="function">
    <text evidence="1">Functions in the biosynthesis of branched-chain amino acids. Catalyzes the dehydration of (2R,3R)-2,3-dihydroxy-3-methylpentanoate (2,3-dihydroxy-3-methylvalerate) into 2-oxo-3-methylpentanoate (2-oxo-3-methylvalerate) and of (2R)-2,3-dihydroxy-3-methylbutanoate (2,3-dihydroxyisovalerate) into 2-oxo-3-methylbutanoate (2-oxoisovalerate), the penultimate precursor to L-isoleucine and L-valine, respectively.</text>
</comment>
<comment type="catalytic activity">
    <reaction evidence="1">
        <text>(2R)-2,3-dihydroxy-3-methylbutanoate = 3-methyl-2-oxobutanoate + H2O</text>
        <dbReference type="Rhea" id="RHEA:24809"/>
        <dbReference type="ChEBI" id="CHEBI:11851"/>
        <dbReference type="ChEBI" id="CHEBI:15377"/>
        <dbReference type="ChEBI" id="CHEBI:49072"/>
        <dbReference type="EC" id="4.2.1.9"/>
    </reaction>
    <physiologicalReaction direction="left-to-right" evidence="1">
        <dbReference type="Rhea" id="RHEA:24810"/>
    </physiologicalReaction>
</comment>
<comment type="catalytic activity">
    <reaction evidence="1">
        <text>(2R,3R)-2,3-dihydroxy-3-methylpentanoate = (S)-3-methyl-2-oxopentanoate + H2O</text>
        <dbReference type="Rhea" id="RHEA:27694"/>
        <dbReference type="ChEBI" id="CHEBI:15377"/>
        <dbReference type="ChEBI" id="CHEBI:35146"/>
        <dbReference type="ChEBI" id="CHEBI:49258"/>
        <dbReference type="EC" id="4.2.1.9"/>
    </reaction>
    <physiologicalReaction direction="left-to-right" evidence="1">
        <dbReference type="Rhea" id="RHEA:27695"/>
    </physiologicalReaction>
</comment>
<comment type="cofactor">
    <cofactor evidence="1">
        <name>[2Fe-2S] cluster</name>
        <dbReference type="ChEBI" id="CHEBI:190135"/>
    </cofactor>
    <text evidence="1">Binds 1 [2Fe-2S] cluster per subunit. This cluster acts as a Lewis acid cofactor.</text>
</comment>
<comment type="cofactor">
    <cofactor evidence="1">
        <name>Mg(2+)</name>
        <dbReference type="ChEBI" id="CHEBI:18420"/>
    </cofactor>
</comment>
<comment type="pathway">
    <text evidence="1">Amino-acid biosynthesis; L-isoleucine biosynthesis; L-isoleucine from 2-oxobutanoate: step 3/4.</text>
</comment>
<comment type="pathway">
    <text evidence="1">Amino-acid biosynthesis; L-valine biosynthesis; L-valine from pyruvate: step 3/4.</text>
</comment>
<comment type="subunit">
    <text evidence="1">Homodimer.</text>
</comment>
<comment type="similarity">
    <text evidence="1">Belongs to the IlvD/Edd family.</text>
</comment>